<organism>
    <name type="scientific">Bacillus subtilis (strain 168)</name>
    <dbReference type="NCBI Taxonomy" id="224308"/>
    <lineage>
        <taxon>Bacteria</taxon>
        <taxon>Bacillati</taxon>
        <taxon>Bacillota</taxon>
        <taxon>Bacilli</taxon>
        <taxon>Bacillales</taxon>
        <taxon>Bacillaceae</taxon>
        <taxon>Bacillus</taxon>
    </lineage>
</organism>
<feature type="chain" id="PRO_0000084884" description="Uncharacterized MFS-type transporter YuxJ">
    <location>
        <begin position="1"/>
        <end position="392"/>
    </location>
</feature>
<feature type="transmembrane region" description="Helical" evidence="1">
    <location>
        <begin position="2"/>
        <end position="23"/>
    </location>
</feature>
<feature type="transmembrane region" description="Helical" evidence="1">
    <location>
        <begin position="38"/>
        <end position="60"/>
    </location>
</feature>
<feature type="transmembrane region" description="Helical" evidence="1">
    <location>
        <begin position="73"/>
        <end position="95"/>
    </location>
</feature>
<feature type="transmembrane region" description="Helical" evidence="1">
    <location>
        <begin position="153"/>
        <end position="175"/>
    </location>
</feature>
<feature type="transmembrane region" description="Helical" evidence="1">
    <location>
        <begin position="195"/>
        <end position="217"/>
    </location>
</feature>
<feature type="transmembrane region" description="Helical" evidence="1">
    <location>
        <begin position="237"/>
        <end position="259"/>
    </location>
</feature>
<feature type="transmembrane region" description="Helical" evidence="1">
    <location>
        <begin position="272"/>
        <end position="291"/>
    </location>
</feature>
<feature type="transmembrane region" description="Helical" evidence="1">
    <location>
        <begin position="297"/>
        <end position="319"/>
    </location>
</feature>
<feature type="transmembrane region" description="Helical" evidence="1">
    <location>
        <begin position="331"/>
        <end position="353"/>
    </location>
</feature>
<feature type="transmembrane region" description="Helical" evidence="1">
    <location>
        <begin position="357"/>
        <end position="379"/>
    </location>
</feature>
<gene>
    <name type="primary">yuxJ</name>
    <name type="synonym">yugC</name>
    <name type="ordered locus">BSU31480</name>
</gene>
<sequence length="392" mass="43050">MWLANFFVSASTTMIVPFLSLYIETLSSFSNGFVQRWSGYVFGITFLMAFLVSPFWGRFGDKRGYKKILMATGTGIALSIFFMGFVTSVYQLFFLRMAMGLVTGFIPTSLAMISAQTPKSSAGKTLGTLQMGQVSGSLFGPLLGGMLADRFGFTYTFFITSFVIFSSVLLVLFGVKEKHLAEKTAKRTSYSRKEVLSYIFHHPALWVMMLLTMLIQTGNFSIQPLLALYVNELHGPVNLAFFSGMAFSATGLGSLLLARKWGDLGDRYGHRRILIGLLLAASFFFIPQALASSLSVLLVFRFLFGMAMGGLLPCITAAIRVQAPGSIQGEVLGYNVSFRFLGNVLGPLLGGIISSHFTISATFYVTAFLFFAGACMLWIMQKLRKDSYAKAS</sequence>
<protein>
    <recommendedName>
        <fullName>Uncharacterized MFS-type transporter YuxJ</fullName>
    </recommendedName>
    <alternativeName>
        <fullName>ORF1</fullName>
    </alternativeName>
</protein>
<proteinExistence type="inferred from homology"/>
<name>YUXJ_BACSU</name>
<reference key="1">
    <citation type="journal article" date="1997" name="Microbiology">
        <title>Analysis of the Bacillus subtilis genome: cloning and nucleotide sequence of a 62 kb region between 275 degrees (rrnB) and 284 degrees (pai).</title>
        <authorList>
            <person name="Oudega B."/>
            <person name="Koningstein G."/>
            <person name="Rodrigues L."/>
            <person name="de Sales Ramon M."/>
            <person name="Hilbert H."/>
            <person name="Duesterhoeft A."/>
            <person name="Pohl T.M."/>
            <person name="Weitzenegger T."/>
        </authorList>
    </citation>
    <scope>NUCLEOTIDE SEQUENCE [GENOMIC DNA]</scope>
    <source>
        <strain>168</strain>
    </source>
</reference>
<reference key="2">
    <citation type="journal article" date="1997" name="Nature">
        <title>The complete genome sequence of the Gram-positive bacterium Bacillus subtilis.</title>
        <authorList>
            <person name="Kunst F."/>
            <person name="Ogasawara N."/>
            <person name="Moszer I."/>
            <person name="Albertini A.M."/>
            <person name="Alloni G."/>
            <person name="Azevedo V."/>
            <person name="Bertero M.G."/>
            <person name="Bessieres P."/>
            <person name="Bolotin A."/>
            <person name="Borchert S."/>
            <person name="Borriss R."/>
            <person name="Boursier L."/>
            <person name="Brans A."/>
            <person name="Braun M."/>
            <person name="Brignell S.C."/>
            <person name="Bron S."/>
            <person name="Brouillet S."/>
            <person name="Bruschi C.V."/>
            <person name="Caldwell B."/>
            <person name="Capuano V."/>
            <person name="Carter N.M."/>
            <person name="Choi S.-K."/>
            <person name="Codani J.-J."/>
            <person name="Connerton I.F."/>
            <person name="Cummings N.J."/>
            <person name="Daniel R.A."/>
            <person name="Denizot F."/>
            <person name="Devine K.M."/>
            <person name="Duesterhoeft A."/>
            <person name="Ehrlich S.D."/>
            <person name="Emmerson P.T."/>
            <person name="Entian K.-D."/>
            <person name="Errington J."/>
            <person name="Fabret C."/>
            <person name="Ferrari E."/>
            <person name="Foulger D."/>
            <person name="Fritz C."/>
            <person name="Fujita M."/>
            <person name="Fujita Y."/>
            <person name="Fuma S."/>
            <person name="Galizzi A."/>
            <person name="Galleron N."/>
            <person name="Ghim S.-Y."/>
            <person name="Glaser P."/>
            <person name="Goffeau A."/>
            <person name="Golightly E.J."/>
            <person name="Grandi G."/>
            <person name="Guiseppi G."/>
            <person name="Guy B.J."/>
            <person name="Haga K."/>
            <person name="Haiech J."/>
            <person name="Harwood C.R."/>
            <person name="Henaut A."/>
            <person name="Hilbert H."/>
            <person name="Holsappel S."/>
            <person name="Hosono S."/>
            <person name="Hullo M.-F."/>
            <person name="Itaya M."/>
            <person name="Jones L.-M."/>
            <person name="Joris B."/>
            <person name="Karamata D."/>
            <person name="Kasahara Y."/>
            <person name="Klaerr-Blanchard M."/>
            <person name="Klein C."/>
            <person name="Kobayashi Y."/>
            <person name="Koetter P."/>
            <person name="Koningstein G."/>
            <person name="Krogh S."/>
            <person name="Kumano M."/>
            <person name="Kurita K."/>
            <person name="Lapidus A."/>
            <person name="Lardinois S."/>
            <person name="Lauber J."/>
            <person name="Lazarevic V."/>
            <person name="Lee S.-M."/>
            <person name="Levine A."/>
            <person name="Liu H."/>
            <person name="Masuda S."/>
            <person name="Mauel C."/>
            <person name="Medigue C."/>
            <person name="Medina N."/>
            <person name="Mellado R.P."/>
            <person name="Mizuno M."/>
            <person name="Moestl D."/>
            <person name="Nakai S."/>
            <person name="Noback M."/>
            <person name="Noone D."/>
            <person name="O'Reilly M."/>
            <person name="Ogawa K."/>
            <person name="Ogiwara A."/>
            <person name="Oudega B."/>
            <person name="Park S.-H."/>
            <person name="Parro V."/>
            <person name="Pohl T.M."/>
            <person name="Portetelle D."/>
            <person name="Porwollik S."/>
            <person name="Prescott A.M."/>
            <person name="Presecan E."/>
            <person name="Pujic P."/>
            <person name="Purnelle B."/>
            <person name="Rapoport G."/>
            <person name="Rey M."/>
            <person name="Reynolds S."/>
            <person name="Rieger M."/>
            <person name="Rivolta C."/>
            <person name="Rocha E."/>
            <person name="Roche B."/>
            <person name="Rose M."/>
            <person name="Sadaie Y."/>
            <person name="Sato T."/>
            <person name="Scanlan E."/>
            <person name="Schleich S."/>
            <person name="Schroeter R."/>
            <person name="Scoffone F."/>
            <person name="Sekiguchi J."/>
            <person name="Sekowska A."/>
            <person name="Seror S.J."/>
            <person name="Serror P."/>
            <person name="Shin B.-S."/>
            <person name="Soldo B."/>
            <person name="Sorokin A."/>
            <person name="Tacconi E."/>
            <person name="Takagi T."/>
            <person name="Takahashi H."/>
            <person name="Takemaru K."/>
            <person name="Takeuchi M."/>
            <person name="Tamakoshi A."/>
            <person name="Tanaka T."/>
            <person name="Terpstra P."/>
            <person name="Tognoni A."/>
            <person name="Tosato V."/>
            <person name="Uchiyama S."/>
            <person name="Vandenbol M."/>
            <person name="Vannier F."/>
            <person name="Vassarotti A."/>
            <person name="Viari A."/>
            <person name="Wambutt R."/>
            <person name="Wedler E."/>
            <person name="Wedler H."/>
            <person name="Weitzenegger T."/>
            <person name="Winters P."/>
            <person name="Wipat A."/>
            <person name="Yamamoto H."/>
            <person name="Yamane K."/>
            <person name="Yasumoto K."/>
            <person name="Yata K."/>
            <person name="Yoshida K."/>
            <person name="Yoshikawa H.-F."/>
            <person name="Zumstein E."/>
            <person name="Yoshikawa H."/>
            <person name="Danchin A."/>
        </authorList>
    </citation>
    <scope>NUCLEOTIDE SEQUENCE [LARGE SCALE GENOMIC DNA]</scope>
    <source>
        <strain>168</strain>
    </source>
</reference>
<reference key="3">
    <citation type="journal article" date="1999" name="Genome Res.">
        <title>Detecting and analyzing DNA sequencing errors: toward a higher quality of the Bacillus subtilis genome sequence.</title>
        <authorList>
            <person name="Medigue C."/>
            <person name="Rose M."/>
            <person name="Viari A."/>
            <person name="Danchin A."/>
        </authorList>
    </citation>
    <scope>SEQUENCE REVISION</scope>
</reference>
<reference key="4">
    <citation type="journal article" date="1994" name="J. Bacteriol.">
        <title>Cloning, nucleotide sequence, mutagenesis, and mapping of the Bacillus subtilis pbpD gene, which codes for penicillin-binding protein 4.</title>
        <authorList>
            <person name="Popham D.L."/>
            <person name="Setlow P."/>
        </authorList>
    </citation>
    <scope>NUCLEOTIDE SEQUENCE [GENOMIC DNA] OF 137-392</scope>
    <source>
        <strain>168</strain>
    </source>
</reference>
<dbReference type="EMBL" id="Z93933">
    <property type="protein sequence ID" value="CAB07914.1"/>
    <property type="status" value="ALT_FRAME"/>
    <property type="molecule type" value="Genomic_DNA"/>
</dbReference>
<dbReference type="EMBL" id="AL009126">
    <property type="protein sequence ID" value="CAB15137.2"/>
    <property type="molecule type" value="Genomic_DNA"/>
</dbReference>
<dbReference type="EMBL" id="U11882">
    <property type="protein sequence ID" value="AAA64942.1"/>
    <property type="molecule type" value="Genomic_DNA"/>
</dbReference>
<dbReference type="PIR" id="C70025">
    <property type="entry name" value="C70025"/>
</dbReference>
<dbReference type="RefSeq" id="NP_391026.2">
    <property type="nucleotide sequence ID" value="NC_000964.3"/>
</dbReference>
<dbReference type="RefSeq" id="WP_003228842.1">
    <property type="nucleotide sequence ID" value="NZ_OZ025638.1"/>
</dbReference>
<dbReference type="SMR" id="P40760"/>
<dbReference type="FunCoup" id="P40760">
    <property type="interactions" value="40"/>
</dbReference>
<dbReference type="IntAct" id="P40760">
    <property type="interactions" value="1"/>
</dbReference>
<dbReference type="STRING" id="224308.BSU31480"/>
<dbReference type="PaxDb" id="224308-BSU31480"/>
<dbReference type="EnsemblBacteria" id="CAB15137">
    <property type="protein sequence ID" value="CAB15137"/>
    <property type="gene ID" value="BSU_31480"/>
</dbReference>
<dbReference type="GeneID" id="938852"/>
<dbReference type="KEGG" id="bsu:BSU31480"/>
<dbReference type="PATRIC" id="fig|224308.43.peg.3296"/>
<dbReference type="eggNOG" id="COG2814">
    <property type="taxonomic scope" value="Bacteria"/>
</dbReference>
<dbReference type="InParanoid" id="P40760"/>
<dbReference type="OrthoDB" id="65739at2"/>
<dbReference type="PhylomeDB" id="P40760"/>
<dbReference type="BioCyc" id="BSUB:BSU31480-MONOMER"/>
<dbReference type="Proteomes" id="UP000001570">
    <property type="component" value="Chromosome"/>
</dbReference>
<dbReference type="GO" id="GO:0005886">
    <property type="term" value="C:plasma membrane"/>
    <property type="evidence" value="ECO:0007669"/>
    <property type="project" value="UniProtKB-SubCell"/>
</dbReference>
<dbReference type="GO" id="GO:0022857">
    <property type="term" value="F:transmembrane transporter activity"/>
    <property type="evidence" value="ECO:0007669"/>
    <property type="project" value="InterPro"/>
</dbReference>
<dbReference type="CDD" id="cd17391">
    <property type="entry name" value="MFS_MdtG_MDR_like"/>
    <property type="match status" value="1"/>
</dbReference>
<dbReference type="Gene3D" id="1.20.1250.20">
    <property type="entry name" value="MFS general substrate transporter like domains"/>
    <property type="match status" value="2"/>
</dbReference>
<dbReference type="InterPro" id="IPR011701">
    <property type="entry name" value="MFS"/>
</dbReference>
<dbReference type="InterPro" id="IPR020846">
    <property type="entry name" value="MFS_dom"/>
</dbReference>
<dbReference type="InterPro" id="IPR050497">
    <property type="entry name" value="MFS_MdtG_subfamily"/>
</dbReference>
<dbReference type="InterPro" id="IPR036259">
    <property type="entry name" value="MFS_trans_sf"/>
</dbReference>
<dbReference type="InterPro" id="IPR001958">
    <property type="entry name" value="Tet-R_TetA/multi-R_MdtG-like"/>
</dbReference>
<dbReference type="PANTHER" id="PTHR43414:SF3">
    <property type="entry name" value="LMO2377 PROTEIN"/>
    <property type="match status" value="1"/>
</dbReference>
<dbReference type="PANTHER" id="PTHR43414">
    <property type="entry name" value="MULTIDRUG RESISTANCE PROTEIN MDTG"/>
    <property type="match status" value="1"/>
</dbReference>
<dbReference type="Pfam" id="PF07690">
    <property type="entry name" value="MFS_1"/>
    <property type="match status" value="1"/>
</dbReference>
<dbReference type="PRINTS" id="PR01035">
    <property type="entry name" value="TCRTETA"/>
</dbReference>
<dbReference type="SUPFAM" id="SSF103473">
    <property type="entry name" value="MFS general substrate transporter"/>
    <property type="match status" value="1"/>
</dbReference>
<dbReference type="PROSITE" id="PS50850">
    <property type="entry name" value="MFS"/>
    <property type="match status" value="1"/>
</dbReference>
<evidence type="ECO:0000255" key="1"/>
<evidence type="ECO:0000305" key="2"/>
<accession>P40760</accession>
<keyword id="KW-1003">Cell membrane</keyword>
<keyword id="KW-0472">Membrane</keyword>
<keyword id="KW-1185">Reference proteome</keyword>
<keyword id="KW-0812">Transmembrane</keyword>
<keyword id="KW-1133">Transmembrane helix</keyword>
<keyword id="KW-0813">Transport</keyword>
<comment type="subcellular location">
    <subcellularLocation>
        <location evidence="2">Cell membrane</location>
        <topology evidence="2">Multi-pass membrane protein</topology>
    </subcellularLocation>
</comment>
<comment type="similarity">
    <text evidence="2">Belongs to the major facilitator superfamily.</text>
</comment>
<comment type="sequence caution" evidence="2">
    <conflict type="frameshift">
        <sequence resource="EMBL-CDS" id="CAB07914"/>
    </conflict>
</comment>